<proteinExistence type="inferred from homology"/>
<comment type="function">
    <text evidence="1">Binds together with bS18 to 16S ribosomal RNA.</text>
</comment>
<comment type="similarity">
    <text evidence="1">Belongs to the bacterial ribosomal protein bS6 family.</text>
</comment>
<organism>
    <name type="scientific">Hahella chejuensis (strain KCTC 2396)</name>
    <dbReference type="NCBI Taxonomy" id="349521"/>
    <lineage>
        <taxon>Bacteria</taxon>
        <taxon>Pseudomonadati</taxon>
        <taxon>Pseudomonadota</taxon>
        <taxon>Gammaproteobacteria</taxon>
        <taxon>Oceanospirillales</taxon>
        <taxon>Hahellaceae</taxon>
        <taxon>Hahella</taxon>
    </lineage>
</organism>
<name>RS6_HAHCH</name>
<protein>
    <recommendedName>
        <fullName evidence="1">Small ribosomal subunit protein bS6</fullName>
    </recommendedName>
    <alternativeName>
        <fullName evidence="3">30S ribosomal protein S6</fullName>
    </alternativeName>
</protein>
<keyword id="KW-1185">Reference proteome</keyword>
<keyword id="KW-0687">Ribonucleoprotein</keyword>
<keyword id="KW-0689">Ribosomal protein</keyword>
<keyword id="KW-0694">RNA-binding</keyword>
<keyword id="KW-0699">rRNA-binding</keyword>
<reference key="1">
    <citation type="journal article" date="2005" name="Nucleic Acids Res.">
        <title>Genomic blueprint of Hahella chejuensis, a marine microbe producing an algicidal agent.</title>
        <authorList>
            <person name="Jeong H."/>
            <person name="Yim J.H."/>
            <person name="Lee C."/>
            <person name="Choi S.-H."/>
            <person name="Park Y.K."/>
            <person name="Yoon S.H."/>
            <person name="Hur C.-G."/>
            <person name="Kang H.-Y."/>
            <person name="Kim D."/>
            <person name="Lee H.H."/>
            <person name="Park K.H."/>
            <person name="Park S.-H."/>
            <person name="Park H.-S."/>
            <person name="Lee H.K."/>
            <person name="Oh T.K."/>
            <person name="Kim J.F."/>
        </authorList>
    </citation>
    <scope>NUCLEOTIDE SEQUENCE [LARGE SCALE GENOMIC DNA]</scope>
    <source>
        <strain>KCTC 2396</strain>
    </source>
</reference>
<evidence type="ECO:0000255" key="1">
    <source>
        <dbReference type="HAMAP-Rule" id="MF_00360"/>
    </source>
</evidence>
<evidence type="ECO:0000256" key="2">
    <source>
        <dbReference type="SAM" id="MobiDB-lite"/>
    </source>
</evidence>
<evidence type="ECO:0000305" key="3"/>
<sequence length="142" mass="16398">MRHYEIVIMVHPDQSEQVPAMVERYTSSVNAGGGKVHRLEDWGRRHMAYPINKIHKAHYVLMNIECSQEVIDELMHNFRFNDAILRDLVIRRKDAVTEVSPIKAAESREQRAPRGEDRPARVVADDVDDSDDDTDDEDSNDE</sequence>
<gene>
    <name evidence="1" type="primary">rpsF</name>
    <name type="ordered locus">HCH_01711</name>
</gene>
<dbReference type="EMBL" id="CP000155">
    <property type="protein sequence ID" value="ABC28559.1"/>
    <property type="molecule type" value="Genomic_DNA"/>
</dbReference>
<dbReference type="RefSeq" id="WP_011395631.1">
    <property type="nucleotide sequence ID" value="NC_007645.1"/>
</dbReference>
<dbReference type="SMR" id="Q2SLB5"/>
<dbReference type="STRING" id="349521.HCH_01711"/>
<dbReference type="KEGG" id="hch:HCH_01711"/>
<dbReference type="eggNOG" id="COG0360">
    <property type="taxonomic scope" value="Bacteria"/>
</dbReference>
<dbReference type="HOGENOM" id="CLU_113441_6_1_6"/>
<dbReference type="OrthoDB" id="9812702at2"/>
<dbReference type="Proteomes" id="UP000000238">
    <property type="component" value="Chromosome"/>
</dbReference>
<dbReference type="GO" id="GO:0022627">
    <property type="term" value="C:cytosolic small ribosomal subunit"/>
    <property type="evidence" value="ECO:0007669"/>
    <property type="project" value="TreeGrafter"/>
</dbReference>
<dbReference type="GO" id="GO:0070181">
    <property type="term" value="F:small ribosomal subunit rRNA binding"/>
    <property type="evidence" value="ECO:0007669"/>
    <property type="project" value="TreeGrafter"/>
</dbReference>
<dbReference type="GO" id="GO:0003735">
    <property type="term" value="F:structural constituent of ribosome"/>
    <property type="evidence" value="ECO:0007669"/>
    <property type="project" value="InterPro"/>
</dbReference>
<dbReference type="GO" id="GO:0006412">
    <property type="term" value="P:translation"/>
    <property type="evidence" value="ECO:0007669"/>
    <property type="project" value="UniProtKB-UniRule"/>
</dbReference>
<dbReference type="CDD" id="cd00473">
    <property type="entry name" value="bS6"/>
    <property type="match status" value="1"/>
</dbReference>
<dbReference type="FunFam" id="3.30.70.60:FF:000003">
    <property type="entry name" value="30S ribosomal protein S6"/>
    <property type="match status" value="1"/>
</dbReference>
<dbReference type="Gene3D" id="3.30.70.60">
    <property type="match status" value="1"/>
</dbReference>
<dbReference type="HAMAP" id="MF_00360">
    <property type="entry name" value="Ribosomal_bS6"/>
    <property type="match status" value="1"/>
</dbReference>
<dbReference type="InterPro" id="IPR000529">
    <property type="entry name" value="Ribosomal_bS6"/>
</dbReference>
<dbReference type="InterPro" id="IPR035980">
    <property type="entry name" value="Ribosomal_bS6_sf"/>
</dbReference>
<dbReference type="InterPro" id="IPR020814">
    <property type="entry name" value="Ribosomal_S6_plastid/chlpt"/>
</dbReference>
<dbReference type="InterPro" id="IPR014717">
    <property type="entry name" value="Transl_elong_EF1B/ribsomal_bS6"/>
</dbReference>
<dbReference type="NCBIfam" id="TIGR00166">
    <property type="entry name" value="S6"/>
    <property type="match status" value="1"/>
</dbReference>
<dbReference type="PANTHER" id="PTHR21011">
    <property type="entry name" value="MITOCHONDRIAL 28S RIBOSOMAL PROTEIN S6"/>
    <property type="match status" value="1"/>
</dbReference>
<dbReference type="PANTHER" id="PTHR21011:SF1">
    <property type="entry name" value="SMALL RIBOSOMAL SUBUNIT PROTEIN BS6M"/>
    <property type="match status" value="1"/>
</dbReference>
<dbReference type="Pfam" id="PF01250">
    <property type="entry name" value="Ribosomal_S6"/>
    <property type="match status" value="1"/>
</dbReference>
<dbReference type="SUPFAM" id="SSF54995">
    <property type="entry name" value="Ribosomal protein S6"/>
    <property type="match status" value="1"/>
</dbReference>
<accession>Q2SLB5</accession>
<feature type="chain" id="PRO_1000005272" description="Small ribosomal subunit protein bS6">
    <location>
        <begin position="1"/>
        <end position="142"/>
    </location>
</feature>
<feature type="region of interest" description="Disordered" evidence="2">
    <location>
        <begin position="103"/>
        <end position="142"/>
    </location>
</feature>
<feature type="compositionally biased region" description="Basic and acidic residues" evidence="2">
    <location>
        <begin position="105"/>
        <end position="124"/>
    </location>
</feature>
<feature type="compositionally biased region" description="Acidic residues" evidence="2">
    <location>
        <begin position="125"/>
        <end position="142"/>
    </location>
</feature>